<comment type="function">
    <text evidence="3 4 5 6 7 8">Probable component of the nca-1 sodium channel complex, a cation channel that regulates neuronal activity by transmitting depolarization signals to synapses. Regulates the transition from slow to rapid forms of locomotion. Required for localization of nca-1 along axons and in non-synaptic regions. Contributes to endocytosis defects in synaptojanin mutants. Involved in the control of anasthetic response to halothane.</text>
</comment>
<comment type="subcellular location">
    <subcellularLocation>
        <location evidence="9">Membrane</location>
        <topology evidence="9">Multi-pass membrane protein</topology>
    </subcellularLocation>
</comment>
<comment type="alternative products">
    <event type="alternative splicing"/>
    <isoform>
        <id>Q9XV66-4</id>
        <name>d</name>
        <sequence type="displayed"/>
    </isoform>
    <isoform>
        <id>Q9XV66-1</id>
        <name>a</name>
        <sequence type="described" ref="VSP_044200"/>
    </isoform>
    <isoform>
        <id>Q9XV66-2</id>
        <name>b</name>
        <sequence type="described" ref="VSP_044200 VSP_044201 VSP_044202"/>
    </isoform>
    <isoform>
        <id>Q9XV66-3</id>
        <name>c</name>
        <sequence type="described" ref="VSP_044199 VSP_044200 VSP_044202"/>
    </isoform>
    <isoform>
        <id>Q9XV66-5</id>
        <name>e</name>
        <sequence type="described" ref="VSP_044203 VSP_044200 VSP_044201 VSP_044202"/>
    </isoform>
</comment>
<comment type="tissue specificity">
    <text evidence="3 5">Expressed in the nervous system. Expressed in both acetylcholine and GABA motor neurons.</text>
</comment>
<comment type="disruption phenotype">
    <text evidence="3">Fainters phenotype, characterized by defects in locomotion, vesicle depletion, and electrophysiological defects in synaptojanin mutants.</text>
</comment>
<comment type="similarity">
    <text evidence="9">Belongs to the unc-80 family.</text>
</comment>
<reference key="1">
    <citation type="journal article" date="1998" name="Science">
        <title>Genome sequence of the nematode C. elegans: a platform for investigating biology.</title>
        <authorList>
            <consortium name="The C. elegans sequencing consortium"/>
        </authorList>
    </citation>
    <scope>NUCLEOTIDE SEQUENCE [LARGE SCALE GENOMIC DNA]</scope>
    <scope>ALTERNATIVE SPLICING</scope>
    <source>
        <strain>Bristol N2</strain>
    </source>
</reference>
<reference key="2">
    <citation type="journal article" date="1987" name="Science">
        <title>Genetic analysis of halothane sensitivity in Caenorhabditis elegans.</title>
        <authorList>
            <person name="Sedensky M.M."/>
            <person name="Meneely P.M."/>
        </authorList>
    </citation>
    <scope>FUNCTION</scope>
</reference>
<reference key="3">
    <citation type="journal article" date="1988" name="Anesthesiology">
        <title>The effect of two genes on anesthetic response in the nematode Caenorhabditis elegans.</title>
        <authorList>
            <person name="Morgan P.G."/>
            <person name="Sedensky M.M."/>
            <person name="Meneely P.M."/>
            <person name="Cascorbi H.F."/>
        </authorList>
    </citation>
    <scope>FUNCTION</scope>
</reference>
<reference key="4">
    <citation type="journal article" date="1990" name="Proc. Natl. Acad. Sci. U.S.A.">
        <title>Multiple sites of action of volatile anesthetics in Caenorhabditis elegans.</title>
        <authorList>
            <person name="Morgan P.G."/>
            <person name="Sedensky M."/>
            <person name="Meneely P.M."/>
        </authorList>
    </citation>
    <scope>FUNCTION</scope>
</reference>
<reference key="5">
    <citation type="journal article" date="2007" name="Curr. Biol.">
        <title>UNC-80 and the NCA ion channels contribute to endocytosis defects in synaptojanin mutants.</title>
        <authorList>
            <person name="Jospin M."/>
            <person name="Watanabe S."/>
            <person name="Joshi D."/>
            <person name="Young S."/>
            <person name="Hamming K."/>
            <person name="Thacker C."/>
            <person name="Snutch T.P."/>
            <person name="Jorgensen E.M."/>
            <person name="Schuske K."/>
        </authorList>
    </citation>
    <scope>FUNCTION</scope>
    <scope>TISSUE SPECIFICITY</scope>
    <scope>DISRUPTION PHENOTYPE</scope>
</reference>
<reference key="6">
    <citation type="journal article" date="2008" name="PLoS Biol.">
        <title>A putative cation channel, NCA-1, and a novel protein, UNC-80, transmit neuronal activity in C. elegans.</title>
        <authorList>
            <person name="Yeh E."/>
            <person name="Ng S."/>
            <person name="Zhang M."/>
            <person name="Bouhours M."/>
            <person name="Wang Y."/>
            <person name="Wang M."/>
            <person name="Hung W."/>
            <person name="Aoyagi K."/>
            <person name="Melnik-Martinez K."/>
            <person name="Li M."/>
            <person name="Liu F."/>
            <person name="Schafer W.R."/>
            <person name="Zhen M."/>
        </authorList>
    </citation>
    <scope>FUNCTION</scope>
</reference>
<reference key="7">
    <citation type="journal article" date="2008" name="Proc. Natl. Acad. Sci. U.S.A.">
        <title>Genetic analysis of crawling and swimming locomotory patterns in C. elegans.</title>
        <authorList>
            <person name="Pierce-Shimomura J.T."/>
            <person name="Chen B.L."/>
            <person name="Mun J.J."/>
            <person name="Ho R."/>
            <person name="Sarkis R."/>
            <person name="McIntire S.L."/>
        </authorList>
    </citation>
    <scope>FUNCTION</scope>
    <scope>TISSUE SPECIFICITY</scope>
</reference>
<organism>
    <name type="scientific">Caenorhabditis elegans</name>
    <dbReference type="NCBI Taxonomy" id="6239"/>
    <lineage>
        <taxon>Eukaryota</taxon>
        <taxon>Metazoa</taxon>
        <taxon>Ecdysozoa</taxon>
        <taxon>Nematoda</taxon>
        <taxon>Chromadorea</taxon>
        <taxon>Rhabditida</taxon>
        <taxon>Rhabditina</taxon>
        <taxon>Rhabditomorpha</taxon>
        <taxon>Rhabditoidea</taxon>
        <taxon>Rhabditidae</taxon>
        <taxon>Peloderinae</taxon>
        <taxon>Caenorhabditis</taxon>
    </lineage>
</organism>
<feature type="chain" id="PRO_0000367808" description="Protein unc-80">
    <location>
        <begin position="1"/>
        <end position="3263"/>
    </location>
</feature>
<feature type="transmembrane region" description="Helical" evidence="1">
    <location>
        <begin position="2088"/>
        <end position="2108"/>
    </location>
</feature>
<feature type="transmembrane region" description="Helical" evidence="1">
    <location>
        <begin position="2318"/>
        <end position="2338"/>
    </location>
</feature>
<feature type="transmembrane region" description="Helical" evidence="1">
    <location>
        <begin position="2352"/>
        <end position="2372"/>
    </location>
</feature>
<feature type="transmembrane region" description="Helical" evidence="1">
    <location>
        <begin position="2953"/>
        <end position="2973"/>
    </location>
</feature>
<feature type="transmembrane region" description="Helical" evidence="1">
    <location>
        <begin position="2995"/>
        <end position="3015"/>
    </location>
</feature>
<feature type="region of interest" description="Disordered" evidence="2">
    <location>
        <begin position="491"/>
        <end position="527"/>
    </location>
</feature>
<feature type="region of interest" description="Disordered" evidence="2">
    <location>
        <begin position="627"/>
        <end position="666"/>
    </location>
</feature>
<feature type="region of interest" description="Disordered" evidence="2">
    <location>
        <begin position="939"/>
        <end position="1010"/>
    </location>
</feature>
<feature type="region of interest" description="Disordered" evidence="2">
    <location>
        <begin position="1042"/>
        <end position="1076"/>
    </location>
</feature>
<feature type="region of interest" description="Disordered" evidence="2">
    <location>
        <begin position="1380"/>
        <end position="1475"/>
    </location>
</feature>
<feature type="region of interest" description="Disordered" evidence="2">
    <location>
        <begin position="1633"/>
        <end position="1660"/>
    </location>
</feature>
<feature type="region of interest" description="Disordered" evidence="2">
    <location>
        <begin position="1680"/>
        <end position="1721"/>
    </location>
</feature>
<feature type="region of interest" description="Disordered" evidence="2">
    <location>
        <begin position="3078"/>
        <end position="3166"/>
    </location>
</feature>
<feature type="region of interest" description="Disordered" evidence="2">
    <location>
        <begin position="3178"/>
        <end position="3198"/>
    </location>
</feature>
<feature type="compositionally biased region" description="Basic and acidic residues" evidence="2">
    <location>
        <begin position="499"/>
        <end position="508"/>
    </location>
</feature>
<feature type="compositionally biased region" description="Polar residues" evidence="2">
    <location>
        <begin position="509"/>
        <end position="519"/>
    </location>
</feature>
<feature type="compositionally biased region" description="Low complexity" evidence="2">
    <location>
        <begin position="644"/>
        <end position="658"/>
    </location>
</feature>
<feature type="compositionally biased region" description="Polar residues" evidence="2">
    <location>
        <begin position="956"/>
        <end position="967"/>
    </location>
</feature>
<feature type="compositionally biased region" description="Polar residues" evidence="2">
    <location>
        <begin position="981"/>
        <end position="1005"/>
    </location>
</feature>
<feature type="compositionally biased region" description="Acidic residues" evidence="2">
    <location>
        <begin position="1042"/>
        <end position="1055"/>
    </location>
</feature>
<feature type="compositionally biased region" description="Polar residues" evidence="2">
    <location>
        <begin position="1393"/>
        <end position="1402"/>
    </location>
</feature>
<feature type="compositionally biased region" description="Basic residues" evidence="2">
    <location>
        <begin position="1435"/>
        <end position="1447"/>
    </location>
</feature>
<feature type="compositionally biased region" description="Polar residues" evidence="2">
    <location>
        <begin position="1460"/>
        <end position="1469"/>
    </location>
</feature>
<feature type="compositionally biased region" description="Polar residues" evidence="2">
    <location>
        <begin position="1633"/>
        <end position="1653"/>
    </location>
</feature>
<feature type="compositionally biased region" description="Basic and acidic residues" evidence="2">
    <location>
        <begin position="1680"/>
        <end position="1710"/>
    </location>
</feature>
<feature type="compositionally biased region" description="Acidic residues" evidence="2">
    <location>
        <begin position="3124"/>
        <end position="3135"/>
    </location>
</feature>
<feature type="compositionally biased region" description="Polar residues" evidence="2">
    <location>
        <begin position="3138"/>
        <end position="3166"/>
    </location>
</feature>
<feature type="splice variant" id="VSP_044199" description="In isoform c." evidence="9">
    <location>
        <begin position="1"/>
        <end position="18"/>
    </location>
</feature>
<feature type="splice variant" id="VSP_044203" description="In isoform e." evidence="9">
    <location>
        <begin position="1363"/>
        <end position="1406"/>
    </location>
</feature>
<feature type="splice variant" id="VSP_044200" description="In isoform a, isoform b, isoform c and isoform e." evidence="9">
    <location>
        <begin position="1460"/>
        <end position="1497"/>
    </location>
</feature>
<feature type="splice variant" id="VSP_044201" description="In isoform b and isoform e." evidence="9">
    <location>
        <begin position="1636"/>
        <end position="1644"/>
    </location>
</feature>
<feature type="splice variant" id="VSP_044202" description="In isoform b, isoform c and isoform e." evidence="9">
    <location>
        <begin position="2030"/>
        <end position="2041"/>
    </location>
</feature>
<protein>
    <recommendedName>
        <fullName>Protein unc-80</fullName>
    </recommendedName>
    <alternativeName>
        <fullName>Uncoordinated protein 80</fullName>
    </alternativeName>
</protein>
<keyword id="KW-0025">Alternative splicing</keyword>
<keyword id="KW-0472">Membrane</keyword>
<keyword id="KW-1185">Reference proteome</keyword>
<keyword id="KW-0812">Transmembrane</keyword>
<keyword id="KW-1133">Transmembrane helix</keyword>
<accession>Q9XV66</accession>
<accession>B5U8P2</accession>
<accession>C1P651</accession>
<accession>H9G315</accession>
<accession>Q7JKT8</accession>
<gene>
    <name type="primary">unc-80</name>
    <name type="ORF">F25C8.3</name>
</gene>
<proteinExistence type="evidence at transcript level"/>
<evidence type="ECO:0000255" key="1"/>
<evidence type="ECO:0000256" key="2">
    <source>
        <dbReference type="SAM" id="MobiDB-lite"/>
    </source>
</evidence>
<evidence type="ECO:0000269" key="3">
    <source>
    </source>
</evidence>
<evidence type="ECO:0000269" key="4">
    <source>
    </source>
</evidence>
<evidence type="ECO:0000269" key="5">
    <source>
    </source>
</evidence>
<evidence type="ECO:0000269" key="6">
    <source>
    </source>
</evidence>
<evidence type="ECO:0000269" key="7">
    <source>
    </source>
</evidence>
<evidence type="ECO:0000269" key="8">
    <source>
    </source>
</evidence>
<evidence type="ECO:0000305" key="9"/>
<sequence length="3263" mass="366998">MHVRYLQHEHTGTVQLLLMPLSTAASFKSAKWTEEEGEEECDSVPLPIQTFLWRQTNPFLGDKIGKLHEASCVTFERVVVQNILHGLSPSLSNALASVSRWKLVRAALPHVIQCCGSLLLANVGEKKLPTSLQKILYILHWMLIDSSSECIENASTKDDRSVCQSRTQGLFNISSIQLFIYLIAPLADVISEEEVVDNIRLESGLKVWQAIWQFRQPDVWCFSAPVKQRRDELPQITFARRQNPAQLDTQGIYLGKDENTVRRPSIVPPPKPPRTDVTVLNEKRKLEEEKMKMKEDYVAIEIEAPSLKPNDLLIDMSQGVRNKEFERTSSIVRSVSEYKTNLCGQKEKLATVSKSRTSDAFDSSPTSDSSANMLEEVEGIKFSENENCSLSAVFFSSDQAPLVNLSDICSGFSIEEPHDSTQSSVEVPQHPVLESSMFLSTTSSASDVPPFVLTRASTAEDTTSSCSQQTVIPLAMPVTTETTTLPVTLPKSALTKTTNENRRTDHQRMPSTQKSVSGSTDDELDEGSFSDPTIASYLDVAVIRALLITHWQEKGVYWALSYIHNRLIEIKAYMIIRKSTRQRSNSLPSGERKLSVAPEQLTNPVWDDLKIENKPEEGRSHLHVAFNDTERRKSSDNCLAPHPTTNSRRSSLNTLSRRGINRSNPSLSNSVEVLSIRDDAEDDVSNISSKSIEKENTKLNAVFYPEALGSTNFIEKDGKISATVIVQTVNQVMDRCTGVRQCELALNIADVLLGTPLEQTETFFVQLNIMVFKIYLCLGCPHGCNEGVKSPHGDFLRAKAKAILAGLERVQPDKFKNILNDYVDNYGTQQVIDLLHSITSFCRSELTALDGRRASESRVPSYRNTFNEKDKGIEGRIINATYKTLITKISVISAELSLPENMSLQQDVRLLVNFVQEHHGNPFRRVGLSALKDATCKNPTTSDFHTKEDQTGGSPGAQSQKQSNDQASLRRGLFKKKNEKSGGTTTGNDDSEGDSSPSTPRTVSSMDDGVSPLASTSYYKKKSAPKLHFAFGLLKSVKPDMDEEISDNENEEGTSNEEAGLPQRRPLRQSSKQVKARLPIDSKGGMRLWGTYVPPPNYIDAKGIFDGARRFAFLLETARPGTFPDAPLIAAIMHLKSPVLARASLLLECANLVSRCNRGQWPEWIRSSHHRTFSLGGALANRGTPSATRRMHSLQRQAGRYFYQWGVQIGEHISKLLELSENKSKKTLQMEDTIEDFFDDGIVNNQNGEKCPIALQFIAVLLLQEITAFLRETFKTIPRSKNSKPQTGNSGWDKLLSHRRWSILSNTFNAQQTGSVNSITEINSSIHLNDKERRISFSATEEDSPRGSKDAIDEINAVDKKGSIHMQVVRPPSLSARLFSRQSTHEESGGSAQGSTKSTTYVPETGRRIATGRQRLLKRGSPMATGTQPSLESSHKRKSFRNRKQSKQAHLEEEEKSDGGSLTSQQSPIVQRMRAASMRQSSNFLALFHHAIPEFLDAGATHILSARESLKPTDDGLQSPVESVHPVIIPHSNHGSAHSQQPVVLKSSMDDEEQHMLSNLPWIKVLIKFSNSFDLECNHVGVCSAKCFQRVHRQCFRMIESLSTLYGMERNVSTRADKRNLLADNWQAKQQALRKQTETNSARASIHARQSTAVPRRESAMVGQPEFASKAIKMMLMEKMQQEKEKEKEKEKEEKDALKKQSVEQDHSSTDTEEDAQLPEKNKPMLTYLRSLVLQLVHSPISSVLKCCLLLSVEQHKQMIEVCWKMLIHEDPHVVASAASMFIVASVKKSEESLLIIKTALDSQDPQVRTSGIQRFYTLWRNRFHAWLKMEDGAQASFKVPPPGIDFTLPSPAIGQSQLPVVDPPWMPHLKTKIEELSLKEEEHATSQTIMTMTRTRRKQKQEMVKRAVREAEERQSEQRQLFRLRSSAIVSLAAYEPALFHHQQEQTEESDNSHQHARHVMPVAQPLFPSALLSVVPQIIELLDDPQVDNNGVSVGDVAKKVIWTCIVEDPSLFLRHFLEKLTNRDRQVLISEYAPTPAYEALMSQLRKLVLRFHPLPSQAAHSLLNYLFGFVMHYVRAQCEGSEKAIGMALSICWLLSPNIHGLYFKDLKQTLKKEQCDQALMITANVPSAKKIIVHGLDSTSGGIPSQFPVHEDTQFHQILNDSLEFFNIDEDDLNCFYLTDTKTGVIHLPAAYVRDYYFFHRSFYPQLTLVKLSPEVAEKKMKETAFHQKFIECGKVLLTHNILKYSPQHVIAQRVFFLHDEFTHLPSFPRKSLETCFGMYFGPGGEQLKAMESMHKFVWAKMMSDMFEKMENAFMFADLHLFINVINGIMIMHCEDVLILRRCAATYISISIHFNTLFASQGFFLIMPTLLRCYSQRQTNKVFCGVVEFICRQFYTLHRKPFLLQMCGAIANIIDNSSNDFEINPMRVKAKYWFNLIKKMEEITDEDPLDILGLVPYEKPLKALDLCYRDDPNTFCALTDAMASCICVCAFSPESKRSHHMLLIMQAMLPHMMKRLEEETLQSGNSPAAVKHEISQWITMAVEMKALINSCEQLVRGPTRAFDLVNSVSERGKSFVADSPQFFDPPTTNEDENSRPYHLKEKRSTAVAWEAAEVEEQQKETYRRPRDTLLQLIAAYIEMASVRLKELTKLGANLEHAKIPDVLDHKCYVKLGEVALALLKVAPYDLSTTTCHGLQKYFQIILPVTDWSIESNRSALNIILRRLDKTLSKIAKRQSFRKRAIWIALSSWINGICDTLNAFPYIAHLHPLRTITQLCLRMMVGDPCVEDSAASTALHPTTVLHPTPPPQTFANAVLRLTTILMQALGQFAFSLDFVTSTEGMGVSSERLEAVLCHVLIPLFLRIPNNPKEQSIFQAKDLSQCLTVMQNAISPPLVKQQAPPLISTSTLTTTFIRGAQDVTGRQGSVSVTDRGHSATVSTHRIVRESICQAIYLGLKVLMLTFGKLLAPMWPRVARIVKDLLAKKPGAPTSMAFVDFLLHSNLPISLFILPMIQNKMKQKPGTDQEAAWQTEILEKLDAKSHNIVPPSILLVKCYQELQQLKEELTMKPIEMTRSYTPTMADPHSDSSAASTAPRGASSRQSIDRRTSVHMKKVLPTMKEDIPEDPEDSEDVIDSNSTGQVTSRISKSPSIPLNKTHQSSRTRSVSGFGMWRSVRRKSRHVSSAEESSEERGSVELHDVGHHSALHEPNRTPNRRSTEALVLPLHESIDTNRHRFVSFSTPKKTHEVSEDVFQITEQHQLV</sequence>
<dbReference type="EMBL" id="Z81512">
    <property type="protein sequence ID" value="CAB04172.3"/>
    <property type="molecule type" value="Genomic_DNA"/>
</dbReference>
<dbReference type="EMBL" id="Z81512">
    <property type="protein sequence ID" value="CAE46668.2"/>
    <property type="molecule type" value="Genomic_DNA"/>
</dbReference>
<dbReference type="EMBL" id="Z81512">
    <property type="protein sequence ID" value="CAR64667.2"/>
    <property type="molecule type" value="Genomic_DNA"/>
</dbReference>
<dbReference type="EMBL" id="Z81512">
    <property type="protein sequence ID" value="CAX65056.1"/>
    <property type="molecule type" value="Genomic_DNA"/>
</dbReference>
<dbReference type="EMBL" id="Z81512">
    <property type="protein sequence ID" value="CCG28158.1"/>
    <property type="molecule type" value="Genomic_DNA"/>
</dbReference>
<dbReference type="RefSeq" id="NP_001023839.2">
    <molecule id="Q9XV66-1"/>
    <property type="nucleotide sequence ID" value="NM_001028668.4"/>
</dbReference>
<dbReference type="RefSeq" id="NP_001023840.2">
    <molecule id="Q9XV66-2"/>
    <property type="nucleotide sequence ID" value="NM_001028669.4"/>
</dbReference>
<dbReference type="RefSeq" id="NP_001129895.2">
    <molecule id="Q9XV66-3"/>
    <property type="nucleotide sequence ID" value="NM_001136423.4"/>
</dbReference>
<dbReference type="RefSeq" id="NP_001256961.1">
    <molecule id="Q9XV66-4"/>
    <property type="nucleotide sequence ID" value="NM_001270032.3"/>
</dbReference>
<dbReference type="RefSeq" id="NP_001256962.1">
    <molecule id="Q9XV66-5"/>
    <property type="nucleotide sequence ID" value="NM_001270033.2"/>
</dbReference>
<dbReference type="SMR" id="Q9XV66"/>
<dbReference type="BioGRID" id="45330">
    <property type="interactions" value="1"/>
</dbReference>
<dbReference type="FunCoup" id="Q9XV66">
    <property type="interactions" value="663"/>
</dbReference>
<dbReference type="STRING" id="6239.F25C8.3d.1"/>
<dbReference type="PaxDb" id="6239-F25C8.3d"/>
<dbReference type="PeptideAtlas" id="Q9XV66"/>
<dbReference type="EnsemblMetazoa" id="F25C8.3a.1">
    <molecule id="Q9XV66-1"/>
    <property type="protein sequence ID" value="F25C8.3a.1"/>
    <property type="gene ID" value="WBGene00006812"/>
</dbReference>
<dbReference type="EnsemblMetazoa" id="F25C8.3b.1">
    <molecule id="Q9XV66-2"/>
    <property type="protein sequence ID" value="F25C8.3b.1"/>
    <property type="gene ID" value="WBGene00006812"/>
</dbReference>
<dbReference type="EnsemblMetazoa" id="F25C8.3c.1">
    <molecule id="Q9XV66-3"/>
    <property type="protein sequence ID" value="F25C8.3c.1"/>
    <property type="gene ID" value="WBGene00006812"/>
</dbReference>
<dbReference type="EnsemblMetazoa" id="F25C8.3d.1">
    <molecule id="Q9XV66-4"/>
    <property type="protein sequence ID" value="F25C8.3d.1"/>
    <property type="gene ID" value="WBGene00006812"/>
</dbReference>
<dbReference type="EnsemblMetazoa" id="F25C8.3e.1">
    <molecule id="Q9XV66-5"/>
    <property type="protein sequence ID" value="F25C8.3e.1"/>
    <property type="gene ID" value="WBGene00006812"/>
</dbReference>
<dbReference type="GeneID" id="180374"/>
<dbReference type="KEGG" id="cel:CELE_F25C8.3"/>
<dbReference type="UCSC" id="F25C8.3a">
    <property type="organism name" value="c. elegans"/>
</dbReference>
<dbReference type="AGR" id="WB:WBGene00006812"/>
<dbReference type="CTD" id="180374"/>
<dbReference type="WormBase" id="F25C8.3a">
    <molecule id="Q9XV66-1"/>
    <property type="protein sequence ID" value="CE41563"/>
    <property type="gene ID" value="WBGene00006812"/>
    <property type="gene designation" value="unc-80"/>
</dbReference>
<dbReference type="WormBase" id="F25C8.3b">
    <molecule id="Q9XV66-2"/>
    <property type="protein sequence ID" value="CE47117"/>
    <property type="gene ID" value="WBGene00006812"/>
    <property type="gene designation" value="unc-80"/>
</dbReference>
<dbReference type="WormBase" id="F25C8.3c">
    <molecule id="Q9XV66-3"/>
    <property type="protein sequence ID" value="CE47217"/>
    <property type="gene ID" value="WBGene00006812"/>
    <property type="gene designation" value="unc-80"/>
</dbReference>
<dbReference type="WormBase" id="F25C8.3d">
    <molecule id="Q9XV66-4"/>
    <property type="protein sequence ID" value="CE43592"/>
    <property type="gene ID" value="WBGene00006812"/>
    <property type="gene designation" value="unc-80"/>
</dbReference>
<dbReference type="WormBase" id="F25C8.3e">
    <molecule id="Q9XV66-5"/>
    <property type="protein sequence ID" value="CE47428"/>
    <property type="gene ID" value="WBGene00006812"/>
    <property type="gene designation" value="unc-80"/>
</dbReference>
<dbReference type="eggNOG" id="ENOG502QSTP">
    <property type="taxonomic scope" value="Eukaryota"/>
</dbReference>
<dbReference type="GeneTree" id="ENSGT00640000091496"/>
<dbReference type="InParanoid" id="Q9XV66"/>
<dbReference type="OMA" id="GIVNWFR"/>
<dbReference type="OrthoDB" id="5584001at2759"/>
<dbReference type="PhylomeDB" id="Q9XV66"/>
<dbReference type="PRO" id="PR:Q9XV66"/>
<dbReference type="Proteomes" id="UP000001940">
    <property type="component" value="Chromosome V"/>
</dbReference>
<dbReference type="Bgee" id="WBGene00006812">
    <property type="expression patterns" value="Expressed in larva and 3 other cell types or tissues"/>
</dbReference>
<dbReference type="GO" id="GO:0030424">
    <property type="term" value="C:axon"/>
    <property type="evidence" value="ECO:0000314"/>
    <property type="project" value="WormBase"/>
</dbReference>
<dbReference type="GO" id="GO:0034703">
    <property type="term" value="C:cation channel complex"/>
    <property type="evidence" value="ECO:0000314"/>
    <property type="project" value="UniProtKB"/>
</dbReference>
<dbReference type="GO" id="GO:0005261">
    <property type="term" value="F:monoatomic cation channel activity"/>
    <property type="evidence" value="ECO:0000315"/>
    <property type="project" value="UniProtKB"/>
</dbReference>
<dbReference type="GO" id="GO:0055080">
    <property type="term" value="P:monoatomic cation homeostasis"/>
    <property type="evidence" value="ECO:0000315"/>
    <property type="project" value="UniProtKB"/>
</dbReference>
<dbReference type="GO" id="GO:0040017">
    <property type="term" value="P:positive regulation of locomotion"/>
    <property type="evidence" value="ECO:0000316"/>
    <property type="project" value="WormBase"/>
</dbReference>
<dbReference type="GO" id="GO:0072347">
    <property type="term" value="P:response to anesthetic"/>
    <property type="evidence" value="ECO:0000315"/>
    <property type="project" value="UniProtKB"/>
</dbReference>
<dbReference type="GO" id="GO:0009410">
    <property type="term" value="P:response to xenobiotic stimulus"/>
    <property type="evidence" value="ECO:0000315"/>
    <property type="project" value="WormBase"/>
</dbReference>
<dbReference type="InterPro" id="IPR016024">
    <property type="entry name" value="ARM-type_fold"/>
</dbReference>
<dbReference type="InterPro" id="IPR046460">
    <property type="entry name" value="UNC80_C"/>
</dbReference>
<dbReference type="InterPro" id="IPR045852">
    <property type="entry name" value="UNC80_central"/>
</dbReference>
<dbReference type="InterPro" id="IPR031542">
    <property type="entry name" value="UNC80_N"/>
</dbReference>
<dbReference type="PANTHER" id="PTHR31781:SF1">
    <property type="entry name" value="PROTEIN UNC-80 HOMOLOG"/>
    <property type="match status" value="1"/>
</dbReference>
<dbReference type="PANTHER" id="PTHR31781">
    <property type="entry name" value="UNC80"/>
    <property type="match status" value="1"/>
</dbReference>
<dbReference type="Pfam" id="PF19424">
    <property type="entry name" value="UNC80"/>
    <property type="match status" value="1"/>
</dbReference>
<dbReference type="Pfam" id="PF20262">
    <property type="entry name" value="UNC80_C"/>
    <property type="match status" value="1"/>
</dbReference>
<dbReference type="Pfam" id="PF15778">
    <property type="entry name" value="UNC80_N"/>
    <property type="match status" value="1"/>
</dbReference>
<dbReference type="SUPFAM" id="SSF48371">
    <property type="entry name" value="ARM repeat"/>
    <property type="match status" value="2"/>
</dbReference>
<name>UNC80_CAEEL</name>